<organism>
    <name type="scientific">Aeromonas salmonicida (strain A449)</name>
    <dbReference type="NCBI Taxonomy" id="382245"/>
    <lineage>
        <taxon>Bacteria</taxon>
        <taxon>Pseudomonadati</taxon>
        <taxon>Pseudomonadota</taxon>
        <taxon>Gammaproteobacteria</taxon>
        <taxon>Aeromonadales</taxon>
        <taxon>Aeromonadaceae</taxon>
        <taxon>Aeromonas</taxon>
    </lineage>
</organism>
<proteinExistence type="inferred from homology"/>
<comment type="function">
    <text evidence="1">Catalyzes the synthesis of GMP from XMP.</text>
</comment>
<comment type="catalytic activity">
    <reaction evidence="1">
        <text>XMP + L-glutamine + ATP + H2O = GMP + L-glutamate + AMP + diphosphate + 2 H(+)</text>
        <dbReference type="Rhea" id="RHEA:11680"/>
        <dbReference type="ChEBI" id="CHEBI:15377"/>
        <dbReference type="ChEBI" id="CHEBI:15378"/>
        <dbReference type="ChEBI" id="CHEBI:29985"/>
        <dbReference type="ChEBI" id="CHEBI:30616"/>
        <dbReference type="ChEBI" id="CHEBI:33019"/>
        <dbReference type="ChEBI" id="CHEBI:57464"/>
        <dbReference type="ChEBI" id="CHEBI:58115"/>
        <dbReference type="ChEBI" id="CHEBI:58359"/>
        <dbReference type="ChEBI" id="CHEBI:456215"/>
        <dbReference type="EC" id="6.3.5.2"/>
    </reaction>
</comment>
<comment type="pathway">
    <text evidence="1">Purine metabolism; GMP biosynthesis; GMP from XMP (L-Gln route): step 1/1.</text>
</comment>
<comment type="subunit">
    <text evidence="1">Homodimer.</text>
</comment>
<accession>A4SM23</accession>
<keyword id="KW-0067">ATP-binding</keyword>
<keyword id="KW-0315">Glutamine amidotransferase</keyword>
<keyword id="KW-0332">GMP biosynthesis</keyword>
<keyword id="KW-0436">Ligase</keyword>
<keyword id="KW-0547">Nucleotide-binding</keyword>
<keyword id="KW-0658">Purine biosynthesis</keyword>
<evidence type="ECO:0000255" key="1">
    <source>
        <dbReference type="HAMAP-Rule" id="MF_00344"/>
    </source>
</evidence>
<protein>
    <recommendedName>
        <fullName evidence="1">GMP synthase [glutamine-hydrolyzing]</fullName>
        <ecNumber evidence="1">6.3.5.2</ecNumber>
    </recommendedName>
    <alternativeName>
        <fullName evidence="1">GMP synthetase</fullName>
    </alternativeName>
    <alternativeName>
        <fullName evidence="1">Glutamine amidotransferase</fullName>
    </alternativeName>
</protein>
<dbReference type="EC" id="6.3.5.2" evidence="1"/>
<dbReference type="EMBL" id="CP000644">
    <property type="protein sequence ID" value="ABO89945.1"/>
    <property type="molecule type" value="Genomic_DNA"/>
</dbReference>
<dbReference type="RefSeq" id="WP_011898661.1">
    <property type="nucleotide sequence ID" value="NC_009348.1"/>
</dbReference>
<dbReference type="SMR" id="A4SM23"/>
<dbReference type="STRING" id="29491.GCA_000820065_03495"/>
<dbReference type="KEGG" id="asa:ASA_1869"/>
<dbReference type="PATRIC" id="fig|382245.13.peg.1854"/>
<dbReference type="eggNOG" id="COG0518">
    <property type="taxonomic scope" value="Bacteria"/>
</dbReference>
<dbReference type="eggNOG" id="COG0519">
    <property type="taxonomic scope" value="Bacteria"/>
</dbReference>
<dbReference type="HOGENOM" id="CLU_014340_0_5_6"/>
<dbReference type="UniPathway" id="UPA00189">
    <property type="reaction ID" value="UER00296"/>
</dbReference>
<dbReference type="Proteomes" id="UP000000225">
    <property type="component" value="Chromosome"/>
</dbReference>
<dbReference type="GO" id="GO:0005829">
    <property type="term" value="C:cytosol"/>
    <property type="evidence" value="ECO:0007669"/>
    <property type="project" value="TreeGrafter"/>
</dbReference>
<dbReference type="GO" id="GO:0005524">
    <property type="term" value="F:ATP binding"/>
    <property type="evidence" value="ECO:0007669"/>
    <property type="project" value="UniProtKB-UniRule"/>
</dbReference>
<dbReference type="GO" id="GO:0003921">
    <property type="term" value="F:GMP synthase activity"/>
    <property type="evidence" value="ECO:0007669"/>
    <property type="project" value="InterPro"/>
</dbReference>
<dbReference type="CDD" id="cd01742">
    <property type="entry name" value="GATase1_GMP_Synthase"/>
    <property type="match status" value="1"/>
</dbReference>
<dbReference type="CDD" id="cd01997">
    <property type="entry name" value="GMP_synthase_C"/>
    <property type="match status" value="1"/>
</dbReference>
<dbReference type="FunFam" id="3.30.300.10:FF:000002">
    <property type="entry name" value="GMP synthase [glutamine-hydrolyzing]"/>
    <property type="match status" value="1"/>
</dbReference>
<dbReference type="FunFam" id="3.40.50.620:FF:000001">
    <property type="entry name" value="GMP synthase [glutamine-hydrolyzing]"/>
    <property type="match status" value="1"/>
</dbReference>
<dbReference type="FunFam" id="3.40.50.880:FF:000001">
    <property type="entry name" value="GMP synthase [glutamine-hydrolyzing]"/>
    <property type="match status" value="1"/>
</dbReference>
<dbReference type="Gene3D" id="3.30.300.10">
    <property type="match status" value="1"/>
</dbReference>
<dbReference type="Gene3D" id="3.40.50.880">
    <property type="match status" value="1"/>
</dbReference>
<dbReference type="Gene3D" id="3.40.50.620">
    <property type="entry name" value="HUPs"/>
    <property type="match status" value="1"/>
</dbReference>
<dbReference type="HAMAP" id="MF_00344">
    <property type="entry name" value="GMP_synthase"/>
    <property type="match status" value="1"/>
</dbReference>
<dbReference type="InterPro" id="IPR029062">
    <property type="entry name" value="Class_I_gatase-like"/>
</dbReference>
<dbReference type="InterPro" id="IPR017926">
    <property type="entry name" value="GATASE"/>
</dbReference>
<dbReference type="InterPro" id="IPR001674">
    <property type="entry name" value="GMP_synth_C"/>
</dbReference>
<dbReference type="InterPro" id="IPR004739">
    <property type="entry name" value="GMP_synth_GATase"/>
</dbReference>
<dbReference type="InterPro" id="IPR022955">
    <property type="entry name" value="GMP_synthase"/>
</dbReference>
<dbReference type="InterPro" id="IPR025777">
    <property type="entry name" value="GMPS_ATP_PPase_dom"/>
</dbReference>
<dbReference type="InterPro" id="IPR022310">
    <property type="entry name" value="NAD/GMP_synthase"/>
</dbReference>
<dbReference type="InterPro" id="IPR014729">
    <property type="entry name" value="Rossmann-like_a/b/a_fold"/>
</dbReference>
<dbReference type="NCBIfam" id="TIGR00884">
    <property type="entry name" value="guaA_Cterm"/>
    <property type="match status" value="1"/>
</dbReference>
<dbReference type="NCBIfam" id="TIGR00888">
    <property type="entry name" value="guaA_Nterm"/>
    <property type="match status" value="1"/>
</dbReference>
<dbReference type="NCBIfam" id="NF000848">
    <property type="entry name" value="PRK00074.1"/>
    <property type="match status" value="1"/>
</dbReference>
<dbReference type="PANTHER" id="PTHR11922:SF2">
    <property type="entry name" value="GMP SYNTHASE [GLUTAMINE-HYDROLYZING]"/>
    <property type="match status" value="1"/>
</dbReference>
<dbReference type="PANTHER" id="PTHR11922">
    <property type="entry name" value="GMP SYNTHASE-RELATED"/>
    <property type="match status" value="1"/>
</dbReference>
<dbReference type="Pfam" id="PF00117">
    <property type="entry name" value="GATase"/>
    <property type="match status" value="1"/>
</dbReference>
<dbReference type="Pfam" id="PF00958">
    <property type="entry name" value="GMP_synt_C"/>
    <property type="match status" value="1"/>
</dbReference>
<dbReference type="Pfam" id="PF02540">
    <property type="entry name" value="NAD_synthase"/>
    <property type="match status" value="1"/>
</dbReference>
<dbReference type="PRINTS" id="PR00097">
    <property type="entry name" value="ANTSNTHASEII"/>
</dbReference>
<dbReference type="PRINTS" id="PR00099">
    <property type="entry name" value="CPSGATASE"/>
</dbReference>
<dbReference type="PRINTS" id="PR00096">
    <property type="entry name" value="GATASE"/>
</dbReference>
<dbReference type="SUPFAM" id="SSF52402">
    <property type="entry name" value="Adenine nucleotide alpha hydrolases-like"/>
    <property type="match status" value="1"/>
</dbReference>
<dbReference type="SUPFAM" id="SSF52317">
    <property type="entry name" value="Class I glutamine amidotransferase-like"/>
    <property type="match status" value="1"/>
</dbReference>
<dbReference type="SUPFAM" id="SSF54810">
    <property type="entry name" value="GMP synthetase C-terminal dimerisation domain"/>
    <property type="match status" value="1"/>
</dbReference>
<dbReference type="PROSITE" id="PS51273">
    <property type="entry name" value="GATASE_TYPE_1"/>
    <property type="match status" value="1"/>
</dbReference>
<dbReference type="PROSITE" id="PS51553">
    <property type="entry name" value="GMPS_ATP_PPASE"/>
    <property type="match status" value="1"/>
</dbReference>
<feature type="chain" id="PRO_1000120204" description="GMP synthase [glutamine-hydrolyzing]">
    <location>
        <begin position="1"/>
        <end position="526"/>
    </location>
</feature>
<feature type="domain" description="Glutamine amidotransferase type-1" evidence="1">
    <location>
        <begin position="9"/>
        <end position="208"/>
    </location>
</feature>
<feature type="domain" description="GMPS ATP-PPase" evidence="1">
    <location>
        <begin position="209"/>
        <end position="401"/>
    </location>
</feature>
<feature type="active site" description="Nucleophile" evidence="1">
    <location>
        <position position="86"/>
    </location>
</feature>
<feature type="active site" evidence="1">
    <location>
        <position position="182"/>
    </location>
</feature>
<feature type="active site" evidence="1">
    <location>
        <position position="184"/>
    </location>
</feature>
<feature type="binding site" evidence="1">
    <location>
        <begin position="236"/>
        <end position="242"/>
    </location>
    <ligand>
        <name>ATP</name>
        <dbReference type="ChEBI" id="CHEBI:30616"/>
    </ligand>
</feature>
<sequence length="526" mass="58513">MTKDIHQHRILILDFGSQYTQLIARRVREIGVYCELWAWDVTEEQIREFNPSGIILSGGPESVTEAGSPRAPEYVFNAGVPVFGICYGMQTMAEQLGGKVQSSTEREFGYAQVEVLGQTNALLRSIEDAIAPNGNALLDVWMSHGDKVTAIPADFTTIAQTATCPHAAMACESKHFYGVQFHPEVTHTRQGARMLEHFVKDICGCECLWTPATIIDDAVARIREQVGDDEVILGLSGGVDSSVVAMLVHRAIGDRLTCVFVDNGLLRLNEGEQVMEMFGDHFGLNIIKVEAEERFLSALAGEDEPEAKRKIIGRVFVEVFDDEAKKLKNARWLAQGTIYPDVIESAASKTGKAHVIKSHHNVGGMPAEMKMGLVEPLRELFKDEVRRVGLELGLPYDMLYRHPFPGPGLGVRVLGEVKKEYCDILRRADAVFIEELRKADLYNQVSQAFAVFLPVRSVGVMGDGRKYDWVIALRAVETIDFMTAHWAHLPYDFLGHVSNRIINEINGISRVVYDVSGKPPATIEWE</sequence>
<gene>
    <name evidence="1" type="primary">guaA</name>
    <name type="ordered locus">ASA_1869</name>
</gene>
<reference key="1">
    <citation type="journal article" date="2008" name="BMC Genomics">
        <title>The genome of Aeromonas salmonicida subsp. salmonicida A449: insights into the evolution of a fish pathogen.</title>
        <authorList>
            <person name="Reith M.E."/>
            <person name="Singh R.K."/>
            <person name="Curtis B."/>
            <person name="Boyd J.M."/>
            <person name="Bouevitch A."/>
            <person name="Kimball J."/>
            <person name="Munholland J."/>
            <person name="Murphy C."/>
            <person name="Sarty D."/>
            <person name="Williams J."/>
            <person name="Nash J.H."/>
            <person name="Johnson S.C."/>
            <person name="Brown L.L."/>
        </authorList>
    </citation>
    <scope>NUCLEOTIDE SEQUENCE [LARGE SCALE GENOMIC DNA]</scope>
    <source>
        <strain>A449</strain>
    </source>
</reference>
<name>GUAA_AERS4</name>